<feature type="chain" id="PRO_1000190059" description="Galactokinase">
    <location>
        <begin position="1"/>
        <end position="382"/>
    </location>
</feature>
<feature type="active site" description="Proton acceptor" evidence="1">
    <location>
        <position position="174"/>
    </location>
</feature>
<feature type="binding site" evidence="1">
    <location>
        <begin position="34"/>
        <end position="37"/>
    </location>
    <ligand>
        <name>substrate</name>
    </ligand>
</feature>
<feature type="binding site" evidence="1">
    <location>
        <begin position="124"/>
        <end position="130"/>
    </location>
    <ligand>
        <name>ATP</name>
        <dbReference type="ChEBI" id="CHEBI:30616"/>
    </ligand>
</feature>
<feature type="binding site" evidence="1">
    <location>
        <position position="130"/>
    </location>
    <ligand>
        <name>Mg(2+)</name>
        <dbReference type="ChEBI" id="CHEBI:18420"/>
    </ligand>
</feature>
<feature type="binding site" evidence="1">
    <location>
        <position position="162"/>
    </location>
    <ligand>
        <name>Mg(2+)</name>
        <dbReference type="ChEBI" id="CHEBI:18420"/>
    </ligand>
</feature>
<feature type="binding site" evidence="1">
    <location>
        <position position="223"/>
    </location>
    <ligand>
        <name>substrate</name>
    </ligand>
</feature>
<feature type="site" description="Transition state stabilizer" evidence="1">
    <location>
        <position position="28"/>
    </location>
</feature>
<reference key="1">
    <citation type="journal article" date="2008" name="J. Bacteriol.">
        <title>Insights into the environmental resistance gene pool from the genome sequence of the multidrug-resistant environmental isolate Escherichia coli SMS-3-5.</title>
        <authorList>
            <person name="Fricke W.F."/>
            <person name="Wright M.S."/>
            <person name="Lindell A.H."/>
            <person name="Harkins D.M."/>
            <person name="Baker-Austin C."/>
            <person name="Ravel J."/>
            <person name="Stepanauskas R."/>
        </authorList>
    </citation>
    <scope>NUCLEOTIDE SEQUENCE [LARGE SCALE GENOMIC DNA]</scope>
    <source>
        <strain>SMS-3-5 / SECEC</strain>
    </source>
</reference>
<name>GAL1_ECOSM</name>
<accession>B1LM48</accession>
<sequence length="382" mass="41442">MSLKEKTQSLFANAFGYPATHTIQAPGRVNLIGEHTDYNDGFVLPCAIDYQTVISCAPRDDRKVRVMAADYENQLDEFSLDAPIVAHESYQWANYVRGVVKHLQLRNNNFGGVDMVISGNVPQGAGLSSSASLEVAVGTVLQQLYHLPLDGAQIALNGQEAENQFVGCNCGIMDQLISALGKKDHALLIDCRSLGTKAVSMPKGVAVVIINSNFKRTLVGSEYNTRREQCETGARFFQQPALRDVTIEEFNAVAHELDPIVAKRVRHILTENARTVEAASALEQGDLKRMGELMAESHASMRDDFEITVPQIDTLVEIVKAVIGDKGGVRMTGGGFGGCIVALIPEELVPAVQQAVAEQYEAKTGIKETFYVCKPSQGAGQC</sequence>
<organism>
    <name type="scientific">Escherichia coli (strain SMS-3-5 / SECEC)</name>
    <dbReference type="NCBI Taxonomy" id="439855"/>
    <lineage>
        <taxon>Bacteria</taxon>
        <taxon>Pseudomonadati</taxon>
        <taxon>Pseudomonadota</taxon>
        <taxon>Gammaproteobacteria</taxon>
        <taxon>Enterobacterales</taxon>
        <taxon>Enterobacteriaceae</taxon>
        <taxon>Escherichia</taxon>
    </lineage>
</organism>
<proteinExistence type="inferred from homology"/>
<keyword id="KW-0067">ATP-binding</keyword>
<keyword id="KW-0119">Carbohydrate metabolism</keyword>
<keyword id="KW-0963">Cytoplasm</keyword>
<keyword id="KW-0299">Galactose metabolism</keyword>
<keyword id="KW-0418">Kinase</keyword>
<keyword id="KW-0460">Magnesium</keyword>
<keyword id="KW-0479">Metal-binding</keyword>
<keyword id="KW-0547">Nucleotide-binding</keyword>
<keyword id="KW-0808">Transferase</keyword>
<comment type="function">
    <text evidence="1">Catalyzes the transfer of the gamma-phosphate of ATP to D-galactose to form alpha-D-galactose-1-phosphate (Gal-1-P).</text>
</comment>
<comment type="catalytic activity">
    <reaction evidence="1">
        <text>alpha-D-galactose + ATP = alpha-D-galactose 1-phosphate + ADP + H(+)</text>
        <dbReference type="Rhea" id="RHEA:13553"/>
        <dbReference type="ChEBI" id="CHEBI:15378"/>
        <dbReference type="ChEBI" id="CHEBI:28061"/>
        <dbReference type="ChEBI" id="CHEBI:30616"/>
        <dbReference type="ChEBI" id="CHEBI:58336"/>
        <dbReference type="ChEBI" id="CHEBI:456216"/>
        <dbReference type="EC" id="2.7.1.6"/>
    </reaction>
</comment>
<comment type="pathway">
    <text evidence="1">Carbohydrate metabolism; galactose metabolism.</text>
</comment>
<comment type="subcellular location">
    <subcellularLocation>
        <location evidence="1">Cytoplasm</location>
    </subcellularLocation>
</comment>
<comment type="similarity">
    <text evidence="1">Belongs to the GHMP kinase family. GalK subfamily.</text>
</comment>
<gene>
    <name evidence="1" type="primary">galK</name>
    <name type="ordered locus">EcSMS35_0780</name>
</gene>
<dbReference type="EC" id="2.7.1.6" evidence="1"/>
<dbReference type="EMBL" id="CP000970">
    <property type="protein sequence ID" value="ACB15627.1"/>
    <property type="molecule type" value="Genomic_DNA"/>
</dbReference>
<dbReference type="RefSeq" id="WP_000053426.1">
    <property type="nucleotide sequence ID" value="NC_010498.1"/>
</dbReference>
<dbReference type="SMR" id="B1LM48"/>
<dbReference type="KEGG" id="ecm:EcSMS35_0780"/>
<dbReference type="HOGENOM" id="CLU_017814_2_1_6"/>
<dbReference type="UniPathway" id="UPA00214"/>
<dbReference type="Proteomes" id="UP000007011">
    <property type="component" value="Chromosome"/>
</dbReference>
<dbReference type="GO" id="GO:0005829">
    <property type="term" value="C:cytosol"/>
    <property type="evidence" value="ECO:0007669"/>
    <property type="project" value="TreeGrafter"/>
</dbReference>
<dbReference type="GO" id="GO:0005524">
    <property type="term" value="F:ATP binding"/>
    <property type="evidence" value="ECO:0007669"/>
    <property type="project" value="UniProtKB-UniRule"/>
</dbReference>
<dbReference type="GO" id="GO:0004335">
    <property type="term" value="F:galactokinase activity"/>
    <property type="evidence" value="ECO:0007669"/>
    <property type="project" value="UniProtKB-UniRule"/>
</dbReference>
<dbReference type="GO" id="GO:0000287">
    <property type="term" value="F:magnesium ion binding"/>
    <property type="evidence" value="ECO:0007669"/>
    <property type="project" value="UniProtKB-UniRule"/>
</dbReference>
<dbReference type="GO" id="GO:0006012">
    <property type="term" value="P:galactose metabolic process"/>
    <property type="evidence" value="ECO:0007669"/>
    <property type="project" value="UniProtKB-UniRule"/>
</dbReference>
<dbReference type="FunFam" id="3.30.230.10:FF:000017">
    <property type="entry name" value="Galactokinase"/>
    <property type="match status" value="1"/>
</dbReference>
<dbReference type="FunFam" id="3.30.70.890:FF:000001">
    <property type="entry name" value="Galactokinase"/>
    <property type="match status" value="1"/>
</dbReference>
<dbReference type="Gene3D" id="3.30.230.10">
    <property type="match status" value="1"/>
</dbReference>
<dbReference type="Gene3D" id="3.30.70.890">
    <property type="entry name" value="GHMP kinase, C-terminal domain"/>
    <property type="match status" value="1"/>
</dbReference>
<dbReference type="HAMAP" id="MF_00246">
    <property type="entry name" value="Galactokinase"/>
    <property type="match status" value="1"/>
</dbReference>
<dbReference type="InterPro" id="IPR000705">
    <property type="entry name" value="Galactokinase"/>
</dbReference>
<dbReference type="InterPro" id="IPR022963">
    <property type="entry name" value="Galactokinase_bac"/>
</dbReference>
<dbReference type="InterPro" id="IPR019741">
    <property type="entry name" value="Galactokinase_CS"/>
</dbReference>
<dbReference type="InterPro" id="IPR019539">
    <property type="entry name" value="GalKase_N"/>
</dbReference>
<dbReference type="InterPro" id="IPR013750">
    <property type="entry name" value="GHMP_kinase_C_dom"/>
</dbReference>
<dbReference type="InterPro" id="IPR036554">
    <property type="entry name" value="GHMP_kinase_C_sf"/>
</dbReference>
<dbReference type="InterPro" id="IPR006204">
    <property type="entry name" value="GHMP_kinase_N_dom"/>
</dbReference>
<dbReference type="InterPro" id="IPR006203">
    <property type="entry name" value="GHMP_knse_ATP-bd_CS"/>
</dbReference>
<dbReference type="InterPro" id="IPR006206">
    <property type="entry name" value="Mevalonate/galactokinase"/>
</dbReference>
<dbReference type="InterPro" id="IPR020568">
    <property type="entry name" value="Ribosomal_Su5_D2-typ_SF"/>
</dbReference>
<dbReference type="InterPro" id="IPR014721">
    <property type="entry name" value="Ribsml_uS5_D2-typ_fold_subgr"/>
</dbReference>
<dbReference type="NCBIfam" id="TIGR00131">
    <property type="entry name" value="gal_kin"/>
    <property type="match status" value="1"/>
</dbReference>
<dbReference type="NCBIfam" id="NF003472">
    <property type="entry name" value="PRK05101.1"/>
    <property type="match status" value="1"/>
</dbReference>
<dbReference type="PANTHER" id="PTHR10457:SF7">
    <property type="entry name" value="GALACTOKINASE-RELATED"/>
    <property type="match status" value="1"/>
</dbReference>
<dbReference type="PANTHER" id="PTHR10457">
    <property type="entry name" value="MEVALONATE KINASE/GALACTOKINASE"/>
    <property type="match status" value="1"/>
</dbReference>
<dbReference type="Pfam" id="PF10509">
    <property type="entry name" value="GalKase_gal_bdg"/>
    <property type="match status" value="1"/>
</dbReference>
<dbReference type="Pfam" id="PF08544">
    <property type="entry name" value="GHMP_kinases_C"/>
    <property type="match status" value="1"/>
</dbReference>
<dbReference type="Pfam" id="PF00288">
    <property type="entry name" value="GHMP_kinases_N"/>
    <property type="match status" value="1"/>
</dbReference>
<dbReference type="PIRSF" id="PIRSF000530">
    <property type="entry name" value="Galactokinase"/>
    <property type="match status" value="1"/>
</dbReference>
<dbReference type="PRINTS" id="PR00473">
    <property type="entry name" value="GALCTOKINASE"/>
</dbReference>
<dbReference type="PRINTS" id="PR00959">
    <property type="entry name" value="MEVGALKINASE"/>
</dbReference>
<dbReference type="SUPFAM" id="SSF55060">
    <property type="entry name" value="GHMP Kinase, C-terminal domain"/>
    <property type="match status" value="1"/>
</dbReference>
<dbReference type="SUPFAM" id="SSF54211">
    <property type="entry name" value="Ribosomal protein S5 domain 2-like"/>
    <property type="match status" value="1"/>
</dbReference>
<dbReference type="PROSITE" id="PS00106">
    <property type="entry name" value="GALACTOKINASE"/>
    <property type="match status" value="1"/>
</dbReference>
<dbReference type="PROSITE" id="PS00627">
    <property type="entry name" value="GHMP_KINASES_ATP"/>
    <property type="match status" value="1"/>
</dbReference>
<protein>
    <recommendedName>
        <fullName evidence="1">Galactokinase</fullName>
        <ecNumber evidence="1">2.7.1.6</ecNumber>
    </recommendedName>
    <alternativeName>
        <fullName evidence="1">Galactose kinase</fullName>
    </alternativeName>
</protein>
<evidence type="ECO:0000255" key="1">
    <source>
        <dbReference type="HAMAP-Rule" id="MF_00246"/>
    </source>
</evidence>